<protein>
    <recommendedName>
        <fullName evidence="1">Diaminopimelate epimerase</fullName>
        <shortName evidence="1">DAP epimerase</shortName>
        <ecNumber evidence="1">5.1.1.7</ecNumber>
    </recommendedName>
    <alternativeName>
        <fullName evidence="1">PLP-independent amino acid racemase</fullName>
    </alternativeName>
</protein>
<accession>A8G852</accession>
<comment type="function">
    <text evidence="1">Catalyzes the stereoinversion of LL-2,6-diaminopimelate (L,L-DAP) to meso-diaminopimelate (meso-DAP), a precursor of L-lysine and an essential component of the bacterial peptidoglycan.</text>
</comment>
<comment type="catalytic activity">
    <reaction evidence="1">
        <text>(2S,6S)-2,6-diaminopimelate = meso-2,6-diaminopimelate</text>
        <dbReference type="Rhea" id="RHEA:15393"/>
        <dbReference type="ChEBI" id="CHEBI:57609"/>
        <dbReference type="ChEBI" id="CHEBI:57791"/>
        <dbReference type="EC" id="5.1.1.7"/>
    </reaction>
</comment>
<comment type="pathway">
    <text evidence="1">Amino-acid biosynthesis; L-lysine biosynthesis via DAP pathway; DL-2,6-diaminopimelate from LL-2,6-diaminopimelate: step 1/1.</text>
</comment>
<comment type="subunit">
    <text evidence="1">Homodimer.</text>
</comment>
<comment type="subcellular location">
    <subcellularLocation>
        <location evidence="1">Cytoplasm</location>
    </subcellularLocation>
</comment>
<comment type="similarity">
    <text evidence="1">Belongs to the diaminopimelate epimerase family.</text>
</comment>
<reference key="1">
    <citation type="submission" date="2007-09" db="EMBL/GenBank/DDBJ databases">
        <title>Complete sequence of chromosome of Serratia proteamaculans 568.</title>
        <authorList>
            <consortium name="US DOE Joint Genome Institute"/>
            <person name="Copeland A."/>
            <person name="Lucas S."/>
            <person name="Lapidus A."/>
            <person name="Barry K."/>
            <person name="Glavina del Rio T."/>
            <person name="Dalin E."/>
            <person name="Tice H."/>
            <person name="Pitluck S."/>
            <person name="Chain P."/>
            <person name="Malfatti S."/>
            <person name="Shin M."/>
            <person name="Vergez L."/>
            <person name="Schmutz J."/>
            <person name="Larimer F."/>
            <person name="Land M."/>
            <person name="Hauser L."/>
            <person name="Kyrpides N."/>
            <person name="Kim E."/>
            <person name="Taghavi S."/>
            <person name="Newman L."/>
            <person name="Vangronsveld J."/>
            <person name="van der Lelie D."/>
            <person name="Richardson P."/>
        </authorList>
    </citation>
    <scope>NUCLEOTIDE SEQUENCE [LARGE SCALE GENOMIC DNA]</scope>
    <source>
        <strain>568</strain>
    </source>
</reference>
<sequence>MQFSKMHGLGNDFMVVDAVTQNVYFSPELIRRLADRHLGVGFDQLLVVEPPYDPELDFHYRIFNADGSEVAQCGNGARCFARFVRLKGLTNKRDIRVSTQTGRMVLSVTDDDLVCVNMGEPNFDPQTVPFRATKEEKTYIMRAAEHTVLCGVVSMGNPHCVLQVDDVKTAKVELLGPVLEGHERFPERANIGFMQIVSREHIKLRVYERGAGETQACGSGACAAVAVGIQQELLSEEVHVELPGGSLHIRWKGPGSPLFMTGPATHVYDGFIHL</sequence>
<gene>
    <name evidence="1" type="primary">dapF</name>
    <name type="ordered locus">Spro_0182</name>
</gene>
<keyword id="KW-0028">Amino-acid biosynthesis</keyword>
<keyword id="KW-0963">Cytoplasm</keyword>
<keyword id="KW-0413">Isomerase</keyword>
<keyword id="KW-0457">Lysine biosynthesis</keyword>
<proteinExistence type="inferred from homology"/>
<dbReference type="EC" id="5.1.1.7" evidence="1"/>
<dbReference type="EMBL" id="CP000826">
    <property type="protein sequence ID" value="ABV39292.1"/>
    <property type="molecule type" value="Genomic_DNA"/>
</dbReference>
<dbReference type="SMR" id="A8G852"/>
<dbReference type="STRING" id="399741.Spro_0182"/>
<dbReference type="KEGG" id="spe:Spro_0182"/>
<dbReference type="eggNOG" id="COG0253">
    <property type="taxonomic scope" value="Bacteria"/>
</dbReference>
<dbReference type="HOGENOM" id="CLU_053306_1_1_6"/>
<dbReference type="OrthoDB" id="9805408at2"/>
<dbReference type="UniPathway" id="UPA00034">
    <property type="reaction ID" value="UER00025"/>
</dbReference>
<dbReference type="GO" id="GO:0005829">
    <property type="term" value="C:cytosol"/>
    <property type="evidence" value="ECO:0007669"/>
    <property type="project" value="TreeGrafter"/>
</dbReference>
<dbReference type="GO" id="GO:0008837">
    <property type="term" value="F:diaminopimelate epimerase activity"/>
    <property type="evidence" value="ECO:0007669"/>
    <property type="project" value="UniProtKB-UniRule"/>
</dbReference>
<dbReference type="GO" id="GO:0009089">
    <property type="term" value="P:lysine biosynthetic process via diaminopimelate"/>
    <property type="evidence" value="ECO:0007669"/>
    <property type="project" value="UniProtKB-UniRule"/>
</dbReference>
<dbReference type="FunFam" id="3.10.310.10:FF:000001">
    <property type="entry name" value="Diaminopimelate epimerase"/>
    <property type="match status" value="1"/>
</dbReference>
<dbReference type="FunFam" id="3.10.310.10:FF:000002">
    <property type="entry name" value="Diaminopimelate epimerase"/>
    <property type="match status" value="1"/>
</dbReference>
<dbReference type="Gene3D" id="3.10.310.10">
    <property type="entry name" value="Diaminopimelate Epimerase, Chain A, domain 1"/>
    <property type="match status" value="2"/>
</dbReference>
<dbReference type="HAMAP" id="MF_00197">
    <property type="entry name" value="DAP_epimerase"/>
    <property type="match status" value="1"/>
</dbReference>
<dbReference type="InterPro" id="IPR018510">
    <property type="entry name" value="DAP_epimerase_AS"/>
</dbReference>
<dbReference type="InterPro" id="IPR001653">
    <property type="entry name" value="DAP_epimerase_DapF"/>
</dbReference>
<dbReference type="NCBIfam" id="TIGR00652">
    <property type="entry name" value="DapF"/>
    <property type="match status" value="1"/>
</dbReference>
<dbReference type="PANTHER" id="PTHR31689:SF0">
    <property type="entry name" value="DIAMINOPIMELATE EPIMERASE"/>
    <property type="match status" value="1"/>
</dbReference>
<dbReference type="PANTHER" id="PTHR31689">
    <property type="entry name" value="DIAMINOPIMELATE EPIMERASE, CHLOROPLASTIC"/>
    <property type="match status" value="1"/>
</dbReference>
<dbReference type="Pfam" id="PF01678">
    <property type="entry name" value="DAP_epimerase"/>
    <property type="match status" value="2"/>
</dbReference>
<dbReference type="SUPFAM" id="SSF54506">
    <property type="entry name" value="Diaminopimelate epimerase-like"/>
    <property type="match status" value="1"/>
</dbReference>
<dbReference type="PROSITE" id="PS01326">
    <property type="entry name" value="DAP_EPIMERASE"/>
    <property type="match status" value="1"/>
</dbReference>
<evidence type="ECO:0000255" key="1">
    <source>
        <dbReference type="HAMAP-Rule" id="MF_00197"/>
    </source>
</evidence>
<name>DAPF_SERP5</name>
<feature type="chain" id="PRO_1000058545" description="Diaminopimelate epimerase">
    <location>
        <begin position="1"/>
        <end position="274"/>
    </location>
</feature>
<feature type="active site" description="Proton donor" evidence="1">
    <location>
        <position position="73"/>
    </location>
</feature>
<feature type="active site" description="Proton acceptor" evidence="1">
    <location>
        <position position="217"/>
    </location>
</feature>
<feature type="binding site" evidence="1">
    <location>
        <position position="11"/>
    </location>
    <ligand>
        <name>substrate</name>
    </ligand>
</feature>
<feature type="binding site" evidence="1">
    <location>
        <position position="44"/>
    </location>
    <ligand>
        <name>substrate</name>
    </ligand>
</feature>
<feature type="binding site" evidence="1">
    <location>
        <position position="64"/>
    </location>
    <ligand>
        <name>substrate</name>
    </ligand>
</feature>
<feature type="binding site" evidence="1">
    <location>
        <begin position="74"/>
        <end position="75"/>
    </location>
    <ligand>
        <name>substrate</name>
    </ligand>
</feature>
<feature type="binding site" evidence="1">
    <location>
        <position position="157"/>
    </location>
    <ligand>
        <name>substrate</name>
    </ligand>
</feature>
<feature type="binding site" evidence="1">
    <location>
        <position position="190"/>
    </location>
    <ligand>
        <name>substrate</name>
    </ligand>
</feature>
<feature type="binding site" evidence="1">
    <location>
        <begin position="208"/>
        <end position="209"/>
    </location>
    <ligand>
        <name>substrate</name>
    </ligand>
</feature>
<feature type="binding site" evidence="1">
    <location>
        <begin position="218"/>
        <end position="219"/>
    </location>
    <ligand>
        <name>substrate</name>
    </ligand>
</feature>
<feature type="site" description="Could be important to modulate the pK values of the two catalytic cysteine residues" evidence="1">
    <location>
        <position position="159"/>
    </location>
</feature>
<feature type="site" description="Could be important to modulate the pK values of the two catalytic cysteine residues" evidence="1">
    <location>
        <position position="208"/>
    </location>
</feature>
<feature type="site" description="Important for dimerization" evidence="1">
    <location>
        <position position="268"/>
    </location>
</feature>
<organism>
    <name type="scientific">Serratia proteamaculans (strain 568)</name>
    <dbReference type="NCBI Taxonomy" id="399741"/>
    <lineage>
        <taxon>Bacteria</taxon>
        <taxon>Pseudomonadati</taxon>
        <taxon>Pseudomonadota</taxon>
        <taxon>Gammaproteobacteria</taxon>
        <taxon>Enterobacterales</taxon>
        <taxon>Yersiniaceae</taxon>
        <taxon>Serratia</taxon>
    </lineage>
</organism>